<proteinExistence type="inferred from homology"/>
<feature type="chain" id="PRO_0000410046" description="Cytochrome c oxidase assembly protein COX19">
    <location>
        <begin position="1"/>
        <end position="115"/>
    </location>
</feature>
<feature type="domain" description="CHCH" evidence="2">
    <location>
        <begin position="27"/>
        <end position="69"/>
    </location>
</feature>
<feature type="region of interest" description="Disordered" evidence="3">
    <location>
        <begin position="1"/>
        <end position="23"/>
    </location>
</feature>
<feature type="region of interest" description="Disordered" evidence="3">
    <location>
        <begin position="80"/>
        <end position="115"/>
    </location>
</feature>
<feature type="short sequence motif" description="Cx9C motif 1" evidence="2">
    <location>
        <begin position="30"/>
        <end position="40"/>
    </location>
</feature>
<feature type="short sequence motif" description="Cx9C motif 2" evidence="2">
    <location>
        <begin position="51"/>
        <end position="61"/>
    </location>
</feature>
<feature type="compositionally biased region" description="Polar residues" evidence="3">
    <location>
        <begin position="90"/>
        <end position="99"/>
    </location>
</feature>
<feature type="compositionally biased region" description="Pro residues" evidence="3">
    <location>
        <begin position="100"/>
        <end position="109"/>
    </location>
</feature>
<feature type="disulfide bond" evidence="2">
    <location>
        <begin position="30"/>
        <end position="61"/>
    </location>
</feature>
<feature type="disulfide bond" evidence="2">
    <location>
        <begin position="40"/>
        <end position="51"/>
    </location>
</feature>
<protein>
    <recommendedName>
        <fullName>Cytochrome c oxidase assembly protein COX19</fullName>
    </recommendedName>
</protein>
<evidence type="ECO:0000250" key="1"/>
<evidence type="ECO:0000255" key="2">
    <source>
        <dbReference type="PROSITE-ProRule" id="PRU01150"/>
    </source>
</evidence>
<evidence type="ECO:0000256" key="3">
    <source>
        <dbReference type="SAM" id="MobiDB-lite"/>
    </source>
</evidence>
<evidence type="ECO:0000305" key="4"/>
<gene>
    <name type="primary">COX19</name>
    <name type="ordered locus">CNBJ1770</name>
</gene>
<sequence length="115" mass="12552">MSFGRPGFADVFKPSPPARGSFPLDHDGECKAFMISYLKCMKENANDNGKCRLFSKQYLECRMDKGLMARDDMANLGLGDVVDPSALPPASTQTTTAPLSNPPHVPQPPSSEHRI</sequence>
<comment type="function">
    <text evidence="1">Required for the assembly of mitochondrial cytochrome c oxidase.</text>
</comment>
<comment type="subcellular location">
    <subcellularLocation>
        <location evidence="1">Cytoplasm</location>
    </subcellularLocation>
    <subcellularLocation>
        <location evidence="1">Mitochondrion intermembrane space</location>
    </subcellularLocation>
</comment>
<comment type="similarity">
    <text evidence="4">Belongs to the COX19 family.</text>
</comment>
<name>COX19_CRYNB</name>
<reference key="1">
    <citation type="journal article" date="2005" name="Science">
        <title>The genome of the basidiomycetous yeast and human pathogen Cryptococcus neoformans.</title>
        <authorList>
            <person name="Loftus B.J."/>
            <person name="Fung E."/>
            <person name="Roncaglia P."/>
            <person name="Rowley D."/>
            <person name="Amedeo P."/>
            <person name="Bruno D."/>
            <person name="Vamathevan J."/>
            <person name="Miranda M."/>
            <person name="Anderson I.J."/>
            <person name="Fraser J.A."/>
            <person name="Allen J.E."/>
            <person name="Bosdet I.E."/>
            <person name="Brent M.R."/>
            <person name="Chiu R."/>
            <person name="Doering T.L."/>
            <person name="Donlin M.J."/>
            <person name="D'Souza C.A."/>
            <person name="Fox D.S."/>
            <person name="Grinberg V."/>
            <person name="Fu J."/>
            <person name="Fukushima M."/>
            <person name="Haas B.J."/>
            <person name="Huang J.C."/>
            <person name="Janbon G."/>
            <person name="Jones S.J.M."/>
            <person name="Koo H.L."/>
            <person name="Krzywinski M.I."/>
            <person name="Kwon-Chung K.J."/>
            <person name="Lengeler K.B."/>
            <person name="Maiti R."/>
            <person name="Marra M.A."/>
            <person name="Marra R.E."/>
            <person name="Mathewson C.A."/>
            <person name="Mitchell T.G."/>
            <person name="Pertea M."/>
            <person name="Riggs F.R."/>
            <person name="Salzberg S.L."/>
            <person name="Schein J.E."/>
            <person name="Shvartsbeyn A."/>
            <person name="Shin H."/>
            <person name="Shumway M."/>
            <person name="Specht C.A."/>
            <person name="Suh B.B."/>
            <person name="Tenney A."/>
            <person name="Utterback T.R."/>
            <person name="Wickes B.L."/>
            <person name="Wortman J.R."/>
            <person name="Wye N.H."/>
            <person name="Kronstad J.W."/>
            <person name="Lodge J.K."/>
            <person name="Heitman J."/>
            <person name="Davis R.W."/>
            <person name="Fraser C.M."/>
            <person name="Hyman R.W."/>
        </authorList>
    </citation>
    <scope>NUCLEOTIDE SEQUENCE [LARGE SCALE GENOMIC DNA]</scope>
    <source>
        <strain>B-3501A</strain>
    </source>
</reference>
<dbReference type="EMBL" id="AAEY01000049">
    <property type="protein sequence ID" value="EAL18535.1"/>
    <property type="molecule type" value="Genomic_DNA"/>
</dbReference>
<dbReference type="RefSeq" id="XP_773182.1">
    <property type="nucleotide sequence ID" value="XM_768089.1"/>
</dbReference>
<dbReference type="SMR" id="P0CM87"/>
<dbReference type="EnsemblFungi" id="AAW45829">
    <property type="protein sequence ID" value="AAW45829"/>
    <property type="gene ID" value="CNJ01690"/>
</dbReference>
<dbReference type="GeneID" id="4938519"/>
<dbReference type="KEGG" id="cnb:CNBJ1770"/>
<dbReference type="VEuPathDB" id="FungiDB:CNBJ1770"/>
<dbReference type="HOGENOM" id="CLU_141947_2_0_1"/>
<dbReference type="OrthoDB" id="4051at5206"/>
<dbReference type="GO" id="GO:0005758">
    <property type="term" value="C:mitochondrial intermembrane space"/>
    <property type="evidence" value="ECO:0007669"/>
    <property type="project" value="UniProtKB-SubCell"/>
</dbReference>
<dbReference type="GO" id="GO:0033617">
    <property type="term" value="P:mitochondrial cytochrome c oxidase assembly"/>
    <property type="evidence" value="ECO:0007669"/>
    <property type="project" value="TreeGrafter"/>
</dbReference>
<dbReference type="InterPro" id="IPR010625">
    <property type="entry name" value="CHCH"/>
</dbReference>
<dbReference type="InterPro" id="IPR051383">
    <property type="entry name" value="COX19"/>
</dbReference>
<dbReference type="InterPro" id="IPR009069">
    <property type="entry name" value="Cys_alpha_HP_mot_SF"/>
</dbReference>
<dbReference type="PANTHER" id="PTHR21107">
    <property type="entry name" value="CYTOCHROME C OXIDASE ASSEMBLY PROTEIN COX19"/>
    <property type="match status" value="1"/>
</dbReference>
<dbReference type="PANTHER" id="PTHR21107:SF2">
    <property type="entry name" value="CYTOCHROME C OXIDASE ASSEMBLY PROTEIN COX19"/>
    <property type="match status" value="1"/>
</dbReference>
<dbReference type="Pfam" id="PF06747">
    <property type="entry name" value="CHCH"/>
    <property type="match status" value="1"/>
</dbReference>
<dbReference type="SUPFAM" id="SSF47072">
    <property type="entry name" value="Cysteine alpha-hairpin motif"/>
    <property type="match status" value="1"/>
</dbReference>
<dbReference type="PROSITE" id="PS51808">
    <property type="entry name" value="CHCH"/>
    <property type="match status" value="1"/>
</dbReference>
<organism>
    <name type="scientific">Cryptococcus neoformans var. neoformans serotype D (strain B-3501A)</name>
    <name type="common">Filobasidiella neoformans</name>
    <dbReference type="NCBI Taxonomy" id="283643"/>
    <lineage>
        <taxon>Eukaryota</taxon>
        <taxon>Fungi</taxon>
        <taxon>Dikarya</taxon>
        <taxon>Basidiomycota</taxon>
        <taxon>Agaricomycotina</taxon>
        <taxon>Tremellomycetes</taxon>
        <taxon>Tremellales</taxon>
        <taxon>Cryptococcaceae</taxon>
        <taxon>Cryptococcus</taxon>
        <taxon>Cryptococcus neoformans species complex</taxon>
    </lineage>
</organism>
<accession>P0CM87</accession>
<accession>Q55L07</accession>
<accession>Q5KAH3</accession>
<keyword id="KW-0963">Cytoplasm</keyword>
<keyword id="KW-1015">Disulfide bond</keyword>
<keyword id="KW-0496">Mitochondrion</keyword>